<dbReference type="EC" id="6.3.4.20" evidence="1"/>
<dbReference type="EMBL" id="CP000668">
    <property type="protein sequence ID" value="ABP41147.1"/>
    <property type="molecule type" value="Genomic_DNA"/>
</dbReference>
<dbReference type="RefSeq" id="WP_002208635.1">
    <property type="nucleotide sequence ID" value="NZ_CP009715.1"/>
</dbReference>
<dbReference type="SMR" id="A4TPD5"/>
<dbReference type="GeneID" id="57975561"/>
<dbReference type="KEGG" id="ypp:YPDSF_2785"/>
<dbReference type="PATRIC" id="fig|386656.14.peg.42"/>
<dbReference type="UniPathway" id="UPA00391"/>
<dbReference type="GO" id="GO:0005524">
    <property type="term" value="F:ATP binding"/>
    <property type="evidence" value="ECO:0007669"/>
    <property type="project" value="UniProtKB-UniRule"/>
</dbReference>
<dbReference type="GO" id="GO:0016879">
    <property type="term" value="F:ligase activity, forming carbon-nitrogen bonds"/>
    <property type="evidence" value="ECO:0007669"/>
    <property type="project" value="UniProtKB-UniRule"/>
</dbReference>
<dbReference type="GO" id="GO:0008270">
    <property type="term" value="F:zinc ion binding"/>
    <property type="evidence" value="ECO:0007669"/>
    <property type="project" value="UniProtKB-UniRule"/>
</dbReference>
<dbReference type="GO" id="GO:0008616">
    <property type="term" value="P:queuosine biosynthetic process"/>
    <property type="evidence" value="ECO:0007669"/>
    <property type="project" value="UniProtKB-UniRule"/>
</dbReference>
<dbReference type="CDD" id="cd01995">
    <property type="entry name" value="QueC-like"/>
    <property type="match status" value="1"/>
</dbReference>
<dbReference type="FunFam" id="3.40.50.620:FF:000017">
    <property type="entry name" value="7-cyano-7-deazaguanine synthase"/>
    <property type="match status" value="1"/>
</dbReference>
<dbReference type="Gene3D" id="3.40.50.620">
    <property type="entry name" value="HUPs"/>
    <property type="match status" value="1"/>
</dbReference>
<dbReference type="HAMAP" id="MF_01633">
    <property type="entry name" value="QueC"/>
    <property type="match status" value="1"/>
</dbReference>
<dbReference type="InterPro" id="IPR018317">
    <property type="entry name" value="QueC"/>
</dbReference>
<dbReference type="InterPro" id="IPR014729">
    <property type="entry name" value="Rossmann-like_a/b/a_fold"/>
</dbReference>
<dbReference type="NCBIfam" id="TIGR00364">
    <property type="entry name" value="7-cyano-7-deazaguanine synthase QueC"/>
    <property type="match status" value="1"/>
</dbReference>
<dbReference type="NCBIfam" id="NF008317">
    <property type="entry name" value="PRK11106.1"/>
    <property type="match status" value="1"/>
</dbReference>
<dbReference type="PANTHER" id="PTHR42914">
    <property type="entry name" value="7-CYANO-7-DEAZAGUANINE SYNTHASE"/>
    <property type="match status" value="1"/>
</dbReference>
<dbReference type="PANTHER" id="PTHR42914:SF1">
    <property type="entry name" value="7-CYANO-7-DEAZAGUANINE SYNTHASE"/>
    <property type="match status" value="1"/>
</dbReference>
<dbReference type="Pfam" id="PF06508">
    <property type="entry name" value="QueC"/>
    <property type="match status" value="1"/>
</dbReference>
<dbReference type="PIRSF" id="PIRSF006293">
    <property type="entry name" value="ExsB"/>
    <property type="match status" value="1"/>
</dbReference>
<dbReference type="SUPFAM" id="SSF52402">
    <property type="entry name" value="Adenine nucleotide alpha hydrolases-like"/>
    <property type="match status" value="1"/>
</dbReference>
<accession>A4TPD5</accession>
<keyword id="KW-0067">ATP-binding</keyword>
<keyword id="KW-0436">Ligase</keyword>
<keyword id="KW-0479">Metal-binding</keyword>
<keyword id="KW-0547">Nucleotide-binding</keyword>
<keyword id="KW-0671">Queuosine biosynthesis</keyword>
<keyword id="KW-0862">Zinc</keyword>
<organism>
    <name type="scientific">Yersinia pestis (strain Pestoides F)</name>
    <dbReference type="NCBI Taxonomy" id="386656"/>
    <lineage>
        <taxon>Bacteria</taxon>
        <taxon>Pseudomonadati</taxon>
        <taxon>Pseudomonadota</taxon>
        <taxon>Gammaproteobacteria</taxon>
        <taxon>Enterobacterales</taxon>
        <taxon>Yersiniaceae</taxon>
        <taxon>Yersinia</taxon>
    </lineage>
</organism>
<feature type="chain" id="PRO_1000069807" description="7-cyano-7-deazaguanine synthase">
    <location>
        <begin position="1"/>
        <end position="232"/>
    </location>
</feature>
<feature type="binding site" evidence="1">
    <location>
        <begin position="8"/>
        <end position="18"/>
    </location>
    <ligand>
        <name>ATP</name>
        <dbReference type="ChEBI" id="CHEBI:30616"/>
    </ligand>
</feature>
<feature type="binding site" evidence="1">
    <location>
        <position position="189"/>
    </location>
    <ligand>
        <name>Zn(2+)</name>
        <dbReference type="ChEBI" id="CHEBI:29105"/>
    </ligand>
</feature>
<feature type="binding site" evidence="1">
    <location>
        <position position="198"/>
    </location>
    <ligand>
        <name>Zn(2+)</name>
        <dbReference type="ChEBI" id="CHEBI:29105"/>
    </ligand>
</feature>
<feature type="binding site" evidence="1">
    <location>
        <position position="201"/>
    </location>
    <ligand>
        <name>Zn(2+)</name>
        <dbReference type="ChEBI" id="CHEBI:29105"/>
    </ligand>
</feature>
<feature type="binding site" evidence="1">
    <location>
        <position position="204"/>
    </location>
    <ligand>
        <name>Zn(2+)</name>
        <dbReference type="ChEBI" id="CHEBI:29105"/>
    </ligand>
</feature>
<comment type="function">
    <text evidence="1">Catalyzes the ATP-dependent conversion of 7-carboxy-7-deazaguanine (CDG) to 7-cyano-7-deazaguanine (preQ(0)).</text>
</comment>
<comment type="catalytic activity">
    <reaction evidence="1">
        <text>7-carboxy-7-deazaguanine + NH4(+) + ATP = 7-cyano-7-deazaguanine + ADP + phosphate + H2O + H(+)</text>
        <dbReference type="Rhea" id="RHEA:27982"/>
        <dbReference type="ChEBI" id="CHEBI:15377"/>
        <dbReference type="ChEBI" id="CHEBI:15378"/>
        <dbReference type="ChEBI" id="CHEBI:28938"/>
        <dbReference type="ChEBI" id="CHEBI:30616"/>
        <dbReference type="ChEBI" id="CHEBI:43474"/>
        <dbReference type="ChEBI" id="CHEBI:45075"/>
        <dbReference type="ChEBI" id="CHEBI:61036"/>
        <dbReference type="ChEBI" id="CHEBI:456216"/>
        <dbReference type="EC" id="6.3.4.20"/>
    </reaction>
</comment>
<comment type="cofactor">
    <cofactor evidence="1">
        <name>Zn(2+)</name>
        <dbReference type="ChEBI" id="CHEBI:29105"/>
    </cofactor>
    <text evidence="1">Binds 1 zinc ion per subunit.</text>
</comment>
<comment type="pathway">
    <text evidence="1">Purine metabolism; 7-cyano-7-deazaguanine biosynthesis.</text>
</comment>
<comment type="similarity">
    <text evidence="1">Belongs to the QueC family.</text>
</comment>
<sequence>MKRAVVVFSGGQDSTTCLIQALQQYDEVHCITFDYGQRHRTEIDVARELALQLGATAHKVLDVGMLNELAVSSLTRDSIPVPSYDANADGALPSTFVPGRNILFLTLASIYAYQVQAQAVITGVCETDFSGYPDCRDEFIKALNHAIDLGIGRDIAFITPLMWLDKAETWALADYYQQLDLIRHHTLTCYNGIKGDGCGQCAACHLRAKGLASYMANKQQVILNLKQKVGLA</sequence>
<gene>
    <name evidence="1" type="primary">queC</name>
    <name type="ordered locus">YPDSF_2785</name>
</gene>
<evidence type="ECO:0000255" key="1">
    <source>
        <dbReference type="HAMAP-Rule" id="MF_01633"/>
    </source>
</evidence>
<name>QUEC_YERPP</name>
<protein>
    <recommendedName>
        <fullName evidence="1">7-cyano-7-deazaguanine synthase</fullName>
        <ecNumber evidence="1">6.3.4.20</ecNumber>
    </recommendedName>
    <alternativeName>
        <fullName evidence="1">7-cyano-7-carbaguanine synthase</fullName>
    </alternativeName>
    <alternativeName>
        <fullName evidence="1">PreQ(0) synthase</fullName>
    </alternativeName>
    <alternativeName>
        <fullName evidence="1">Queuosine biosynthesis protein QueC</fullName>
    </alternativeName>
</protein>
<reference key="1">
    <citation type="submission" date="2007-02" db="EMBL/GenBank/DDBJ databases">
        <title>Complete sequence of chromosome of Yersinia pestis Pestoides F.</title>
        <authorList>
            <consortium name="US DOE Joint Genome Institute"/>
            <person name="Copeland A."/>
            <person name="Lucas S."/>
            <person name="Lapidus A."/>
            <person name="Barry K."/>
            <person name="Detter J.C."/>
            <person name="Glavina del Rio T."/>
            <person name="Hammon N."/>
            <person name="Israni S."/>
            <person name="Dalin E."/>
            <person name="Tice H."/>
            <person name="Pitluck S."/>
            <person name="Di Bartolo G."/>
            <person name="Chain P."/>
            <person name="Malfatti S."/>
            <person name="Shin M."/>
            <person name="Vergez L."/>
            <person name="Schmutz J."/>
            <person name="Larimer F."/>
            <person name="Land M."/>
            <person name="Hauser L."/>
            <person name="Worsham P."/>
            <person name="Chu M."/>
            <person name="Bearden S."/>
            <person name="Garcia E."/>
            <person name="Richardson P."/>
        </authorList>
    </citation>
    <scope>NUCLEOTIDE SEQUENCE [LARGE SCALE GENOMIC DNA]</scope>
    <source>
        <strain>Pestoides F</strain>
    </source>
</reference>
<proteinExistence type="inferred from homology"/>